<keyword id="KW-1185">Reference proteome</keyword>
<reference key="1">
    <citation type="journal article" date="2004" name="Science">
        <title>The 1.2-megabase genome sequence of Mimivirus.</title>
        <authorList>
            <person name="Raoult D."/>
            <person name="Audic S."/>
            <person name="Robert C."/>
            <person name="Abergel C."/>
            <person name="Renesto P."/>
            <person name="Ogata H."/>
            <person name="La Scola B."/>
            <person name="Susan M."/>
            <person name="Claverie J.-M."/>
        </authorList>
    </citation>
    <scope>NUCLEOTIDE SEQUENCE [LARGE SCALE GENOMIC DNA]</scope>
    <source>
        <strain>Rowbotham-Bradford</strain>
    </source>
</reference>
<sequence length="149" mass="17958">MNLFEDPEKEYHGIDYYDLYSEDKDSEIMYVCVLWDNKPFDIVAIIVAESIDKINDKISQLDKCVVKCLKKKLDKRINKFIVNDSSYETYLTDKYHGFYLEKNKSITDSESRKNQIESIIDYIQLNYNYDKYDNPEYFENIVYYLEPLK</sequence>
<proteinExistence type="predicted"/>
<gene>
    <name type="ordered locus">MIMI_R751</name>
</gene>
<protein>
    <recommendedName>
        <fullName>Uncharacterized protein R751</fullName>
    </recommendedName>
</protein>
<accession>Q5UP01</accession>
<feature type="chain" id="PRO_0000071345" description="Uncharacterized protein R751">
    <location>
        <begin position="1"/>
        <end position="149"/>
    </location>
</feature>
<dbReference type="EMBL" id="AY653733">
    <property type="protein sequence ID" value="AAV51011.1"/>
    <property type="molecule type" value="Genomic_DNA"/>
</dbReference>
<dbReference type="KEGG" id="vg:9925408"/>
<dbReference type="Proteomes" id="UP000001134">
    <property type="component" value="Genome"/>
</dbReference>
<name>YR751_MIMIV</name>
<organismHost>
    <name type="scientific">Acanthamoeba polyphaga</name>
    <name type="common">Amoeba</name>
    <dbReference type="NCBI Taxonomy" id="5757"/>
</organismHost>
<organism>
    <name type="scientific">Acanthamoeba polyphaga mimivirus</name>
    <name type="common">APMV</name>
    <dbReference type="NCBI Taxonomy" id="212035"/>
    <lineage>
        <taxon>Viruses</taxon>
        <taxon>Varidnaviria</taxon>
        <taxon>Bamfordvirae</taxon>
        <taxon>Nucleocytoviricota</taxon>
        <taxon>Megaviricetes</taxon>
        <taxon>Imitervirales</taxon>
        <taxon>Mimiviridae</taxon>
        <taxon>Megamimivirinae</taxon>
        <taxon>Mimivirus</taxon>
        <taxon>Mimivirus bradfordmassiliense</taxon>
    </lineage>
</organism>